<sequence length="273" mass="30649">MNNRVHQGHLARKRFGQNFLNDQFVIDSIVSAINPQKGQAMVEIGPGLAALTEPVGERLDQLTVIELDRDLAARLQTHPFLGPKLTIYQQDAMTMNFGELAEKMGQPLRVFGNLPYNISTPLMFHLFSYTDAIADMHFMLQKEVVNRLVAGPNSKAYGRLSVMAQYYCQVIPVLEVPPSAFTPPPKVDSAVVRLVPHRTMPYPVKEVRVLSRITTEAFNQRRKTIRNSLGNLFSVEVLTELGVDPAVRAENISVEQYCKMANWLSNNLPSKES</sequence>
<protein>
    <recommendedName>
        <fullName evidence="1">Ribosomal RNA small subunit methyltransferase A</fullName>
        <ecNumber evidence="1">2.1.1.182</ecNumber>
    </recommendedName>
    <alternativeName>
        <fullName evidence="1">16S rRNA (adenine(1518)-N(6)/adenine(1519)-N(6))-dimethyltransferase</fullName>
    </alternativeName>
    <alternativeName>
        <fullName evidence="1">16S rRNA dimethyladenosine transferase</fullName>
    </alternativeName>
    <alternativeName>
        <fullName evidence="1">16S rRNA dimethylase</fullName>
    </alternativeName>
    <alternativeName>
        <fullName evidence="1">S-adenosylmethionine-6-N', N'-adenosyl(rRNA) dimethyltransferase</fullName>
    </alternativeName>
</protein>
<comment type="function">
    <text evidence="1">Specifically dimethylates two adjacent adenosines (A1518 and A1519) in the loop of a conserved hairpin near the 3'-end of 16S rRNA in the 30S particle. May play a critical role in biogenesis of 30S subunits.</text>
</comment>
<comment type="catalytic activity">
    <reaction evidence="1">
        <text>adenosine(1518)/adenosine(1519) in 16S rRNA + 4 S-adenosyl-L-methionine = N(6)-dimethyladenosine(1518)/N(6)-dimethyladenosine(1519) in 16S rRNA + 4 S-adenosyl-L-homocysteine + 4 H(+)</text>
        <dbReference type="Rhea" id="RHEA:19609"/>
        <dbReference type="Rhea" id="RHEA-COMP:10232"/>
        <dbReference type="Rhea" id="RHEA-COMP:10233"/>
        <dbReference type="ChEBI" id="CHEBI:15378"/>
        <dbReference type="ChEBI" id="CHEBI:57856"/>
        <dbReference type="ChEBI" id="CHEBI:59789"/>
        <dbReference type="ChEBI" id="CHEBI:74411"/>
        <dbReference type="ChEBI" id="CHEBI:74493"/>
        <dbReference type="EC" id="2.1.1.182"/>
    </reaction>
</comment>
<comment type="subcellular location">
    <subcellularLocation>
        <location evidence="1">Cytoplasm</location>
    </subcellularLocation>
</comment>
<comment type="similarity">
    <text evidence="1">Belongs to the class I-like SAM-binding methyltransferase superfamily. rRNA adenine N(6)-methyltransferase family. RsmA subfamily.</text>
</comment>
<proteinExistence type="inferred from homology"/>
<gene>
    <name evidence="1" type="primary">rsmA</name>
    <name evidence="1" type="synonym">ksgA</name>
    <name type="ordered locus">KPK_4694</name>
</gene>
<reference key="1">
    <citation type="journal article" date="2008" name="PLoS Genet.">
        <title>Complete genome sequence of the N2-fixing broad host range endophyte Klebsiella pneumoniae 342 and virulence predictions verified in mice.</title>
        <authorList>
            <person name="Fouts D.E."/>
            <person name="Tyler H.L."/>
            <person name="DeBoy R.T."/>
            <person name="Daugherty S."/>
            <person name="Ren Q."/>
            <person name="Badger J.H."/>
            <person name="Durkin A.S."/>
            <person name="Huot H."/>
            <person name="Shrivastava S."/>
            <person name="Kothari S."/>
            <person name="Dodson R.J."/>
            <person name="Mohamoud Y."/>
            <person name="Khouri H."/>
            <person name="Roesch L.F.W."/>
            <person name="Krogfelt K.A."/>
            <person name="Struve C."/>
            <person name="Triplett E.W."/>
            <person name="Methe B.A."/>
        </authorList>
    </citation>
    <scope>NUCLEOTIDE SEQUENCE [LARGE SCALE GENOMIC DNA]</scope>
    <source>
        <strain>342</strain>
    </source>
</reference>
<feature type="chain" id="PRO_1000130286" description="Ribosomal RNA small subunit methyltransferase A">
    <location>
        <begin position="1"/>
        <end position="273"/>
    </location>
</feature>
<feature type="binding site" evidence="1">
    <location>
        <position position="18"/>
    </location>
    <ligand>
        <name>S-adenosyl-L-methionine</name>
        <dbReference type="ChEBI" id="CHEBI:59789"/>
    </ligand>
</feature>
<feature type="binding site" evidence="1">
    <location>
        <position position="20"/>
    </location>
    <ligand>
        <name>S-adenosyl-L-methionine</name>
        <dbReference type="ChEBI" id="CHEBI:59789"/>
    </ligand>
</feature>
<feature type="binding site" evidence="1">
    <location>
        <position position="45"/>
    </location>
    <ligand>
        <name>S-adenosyl-L-methionine</name>
        <dbReference type="ChEBI" id="CHEBI:59789"/>
    </ligand>
</feature>
<feature type="binding site" evidence="1">
    <location>
        <position position="66"/>
    </location>
    <ligand>
        <name>S-adenosyl-L-methionine</name>
        <dbReference type="ChEBI" id="CHEBI:59789"/>
    </ligand>
</feature>
<feature type="binding site" evidence="1">
    <location>
        <position position="91"/>
    </location>
    <ligand>
        <name>S-adenosyl-L-methionine</name>
        <dbReference type="ChEBI" id="CHEBI:59789"/>
    </ligand>
</feature>
<feature type="binding site" evidence="1">
    <location>
        <position position="113"/>
    </location>
    <ligand>
        <name>S-adenosyl-L-methionine</name>
        <dbReference type="ChEBI" id="CHEBI:59789"/>
    </ligand>
</feature>
<name>RSMA_KLEP3</name>
<keyword id="KW-0963">Cytoplasm</keyword>
<keyword id="KW-0489">Methyltransferase</keyword>
<keyword id="KW-0694">RNA-binding</keyword>
<keyword id="KW-0698">rRNA processing</keyword>
<keyword id="KW-0949">S-adenosyl-L-methionine</keyword>
<keyword id="KW-0808">Transferase</keyword>
<evidence type="ECO:0000255" key="1">
    <source>
        <dbReference type="HAMAP-Rule" id="MF_00607"/>
    </source>
</evidence>
<dbReference type="EC" id="2.1.1.182" evidence="1"/>
<dbReference type="EMBL" id="CP000964">
    <property type="protein sequence ID" value="ACI09362.1"/>
    <property type="molecule type" value="Genomic_DNA"/>
</dbReference>
<dbReference type="SMR" id="B5Y1Z4"/>
<dbReference type="KEGG" id="kpe:KPK_4694"/>
<dbReference type="HOGENOM" id="CLU_041220_0_1_6"/>
<dbReference type="Proteomes" id="UP000001734">
    <property type="component" value="Chromosome"/>
</dbReference>
<dbReference type="GO" id="GO:0005829">
    <property type="term" value="C:cytosol"/>
    <property type="evidence" value="ECO:0007669"/>
    <property type="project" value="TreeGrafter"/>
</dbReference>
<dbReference type="GO" id="GO:0052908">
    <property type="term" value="F:16S rRNA (adenine(1518)-N(6)/adenine(1519)-N(6))-dimethyltransferase activity"/>
    <property type="evidence" value="ECO:0007669"/>
    <property type="project" value="UniProtKB-EC"/>
</dbReference>
<dbReference type="GO" id="GO:0003723">
    <property type="term" value="F:RNA binding"/>
    <property type="evidence" value="ECO:0007669"/>
    <property type="project" value="UniProtKB-KW"/>
</dbReference>
<dbReference type="FunFam" id="1.10.8.100:FF:000001">
    <property type="entry name" value="Ribosomal RNA small subunit methyltransferase A"/>
    <property type="match status" value="1"/>
</dbReference>
<dbReference type="FunFam" id="3.40.50.150:FF:000006">
    <property type="entry name" value="Ribosomal RNA small subunit methyltransferase A"/>
    <property type="match status" value="1"/>
</dbReference>
<dbReference type="Gene3D" id="1.10.8.100">
    <property type="entry name" value="Ribosomal RNA adenine dimethylase-like, domain 2"/>
    <property type="match status" value="1"/>
</dbReference>
<dbReference type="Gene3D" id="3.40.50.150">
    <property type="entry name" value="Vaccinia Virus protein VP39"/>
    <property type="match status" value="1"/>
</dbReference>
<dbReference type="HAMAP" id="MF_00607">
    <property type="entry name" value="16SrRNA_methyltr_A"/>
    <property type="match status" value="1"/>
</dbReference>
<dbReference type="InterPro" id="IPR001737">
    <property type="entry name" value="KsgA/Erm"/>
</dbReference>
<dbReference type="InterPro" id="IPR023165">
    <property type="entry name" value="rRNA_Ade_diMease-like_C"/>
</dbReference>
<dbReference type="InterPro" id="IPR020596">
    <property type="entry name" value="rRNA_Ade_Mease_Trfase_CS"/>
</dbReference>
<dbReference type="InterPro" id="IPR020598">
    <property type="entry name" value="rRNA_Ade_methylase_Trfase_N"/>
</dbReference>
<dbReference type="InterPro" id="IPR011530">
    <property type="entry name" value="rRNA_adenine_dimethylase"/>
</dbReference>
<dbReference type="InterPro" id="IPR029063">
    <property type="entry name" value="SAM-dependent_MTases_sf"/>
</dbReference>
<dbReference type="NCBIfam" id="TIGR00755">
    <property type="entry name" value="ksgA"/>
    <property type="match status" value="1"/>
</dbReference>
<dbReference type="PANTHER" id="PTHR11727">
    <property type="entry name" value="DIMETHYLADENOSINE TRANSFERASE"/>
    <property type="match status" value="1"/>
</dbReference>
<dbReference type="PANTHER" id="PTHR11727:SF7">
    <property type="entry name" value="DIMETHYLADENOSINE TRANSFERASE-RELATED"/>
    <property type="match status" value="1"/>
</dbReference>
<dbReference type="Pfam" id="PF00398">
    <property type="entry name" value="RrnaAD"/>
    <property type="match status" value="1"/>
</dbReference>
<dbReference type="SMART" id="SM00650">
    <property type="entry name" value="rADc"/>
    <property type="match status" value="1"/>
</dbReference>
<dbReference type="SUPFAM" id="SSF53335">
    <property type="entry name" value="S-adenosyl-L-methionine-dependent methyltransferases"/>
    <property type="match status" value="1"/>
</dbReference>
<dbReference type="PROSITE" id="PS01131">
    <property type="entry name" value="RRNA_A_DIMETH"/>
    <property type="match status" value="1"/>
</dbReference>
<dbReference type="PROSITE" id="PS51689">
    <property type="entry name" value="SAM_RNA_A_N6_MT"/>
    <property type="match status" value="1"/>
</dbReference>
<organism>
    <name type="scientific">Klebsiella pneumoniae (strain 342)</name>
    <dbReference type="NCBI Taxonomy" id="507522"/>
    <lineage>
        <taxon>Bacteria</taxon>
        <taxon>Pseudomonadati</taxon>
        <taxon>Pseudomonadota</taxon>
        <taxon>Gammaproteobacteria</taxon>
        <taxon>Enterobacterales</taxon>
        <taxon>Enterobacteriaceae</taxon>
        <taxon>Klebsiella/Raoultella group</taxon>
        <taxon>Klebsiella</taxon>
        <taxon>Klebsiella pneumoniae complex</taxon>
    </lineage>
</organism>
<accession>B5Y1Z4</accession>